<reference key="1">
    <citation type="journal article" date="1993" name="Gene">
        <title>Characterization and overexpression of the pem gene encoding pectin methylesterase of Erwinia chrysanthemi strain 3937.</title>
        <authorList>
            <person name="Laurent F."/>
            <person name="Kotoujansky A."/>
            <person name="Labesse G."/>
            <person name="Bertheau Y."/>
        </authorList>
    </citation>
    <scope>NUCLEOTIDE SEQUENCE [GENOMIC DNA]</scope>
    <scope>PROTEIN SEQUENCE OF 25-34</scope>
    <scope>FUNCTION</scope>
    <scope>CATALYTIC ACTIVITY</scope>
    <scope>PROBABLE PATHWAY</scope>
    <scope>SUBUNIT</scope>
    <scope>SUBCELLULAR LOCATION</scope>
    <source>
        <strain>3937</strain>
    </source>
</reference>
<reference key="2">
    <citation type="journal article" date="2011" name="J. Bacteriol.">
        <title>Genome sequence of the plant-pathogenic bacterium Dickeya dadantii 3937.</title>
        <authorList>
            <person name="Glasner J.D."/>
            <person name="Yang C.H."/>
            <person name="Reverchon S."/>
            <person name="Hugouvieux-Cotte-Pattat N."/>
            <person name="Condemine G."/>
            <person name="Bohin J.P."/>
            <person name="Van Gijsegem F."/>
            <person name="Yang S."/>
            <person name="Franza T."/>
            <person name="Expert D."/>
            <person name="Plunkett G. III"/>
            <person name="San Francisco M.J."/>
            <person name="Charkowski A.O."/>
            <person name="Py B."/>
            <person name="Bell K."/>
            <person name="Rauscher L."/>
            <person name="Rodriguez-Palenzuela P."/>
            <person name="Toussaint A."/>
            <person name="Holeva M.C."/>
            <person name="He S.Y."/>
            <person name="Douet V."/>
            <person name="Boccara M."/>
            <person name="Blanco C."/>
            <person name="Toth I."/>
            <person name="Anderson B.D."/>
            <person name="Biehl B.S."/>
            <person name="Mau B."/>
            <person name="Flynn S.M."/>
            <person name="Barras F."/>
            <person name="Lindeberg M."/>
            <person name="Birch P.R."/>
            <person name="Tsuyumu S."/>
            <person name="Shi X."/>
            <person name="Hibbing M."/>
            <person name="Yap M.N."/>
            <person name="Carpentier M."/>
            <person name="Dassa E."/>
            <person name="Umehara M."/>
            <person name="Kim J.F."/>
            <person name="Rusch M."/>
            <person name="Soni P."/>
            <person name="Mayhew G.F."/>
            <person name="Fouts D.E."/>
            <person name="Gill S.R."/>
            <person name="Blattner F.R."/>
            <person name="Keen N.T."/>
            <person name="Perna N.T."/>
        </authorList>
    </citation>
    <scope>NUCLEOTIDE SEQUENCE [LARGE SCALE GENOMIC DNA]</scope>
    <source>
        <strain>3937</strain>
    </source>
</reference>
<reference key="3">
    <citation type="journal article" date="1996" name="Mol. Microbiol.">
        <title>Characterization of pectin methylesterase B, an outer membrane lipoprotein of Erwinia chrysanthemi 3937.</title>
        <authorList>
            <person name="Shevchik V.E."/>
            <person name="Condemine G."/>
            <person name="Hugouvieux-Cotte-Pattat N."/>
            <person name="Robert-Baudouy J."/>
        </authorList>
    </citation>
    <scope>DISRUPTION PHENOTYPE</scope>
    <source>
        <strain>3937</strain>
    </source>
</reference>
<reference evidence="9 10 11 12 13 14 15" key="4">
    <citation type="journal article" date="2007" name="EMBO J.">
        <title>Molecular basis of the activity of the phytopathogen pectin methylesterase.</title>
        <authorList>
            <person name="Fries M."/>
            <person name="Ihrig J."/>
            <person name="Brocklehurst K."/>
            <person name="Shevchik V.E."/>
            <person name="Pickersgill R.W."/>
        </authorList>
    </citation>
    <scope>X-RAY CRYSTALLOGRAPHY (1.8 ANGSTROMS) OF 25-366 IN COMPLEXES WITH SUBSTRATES AND PRODUCT</scope>
    <scope>FUNCTION</scope>
    <scope>CATALYTIC ACTIVITY</scope>
    <scope>ACTIVE SITE</scope>
    <scope>REACTION MECHANISM</scope>
    <scope>PROBABLE PATHWAY</scope>
    <scope>SUBUNIT</scope>
    <scope>DISULFIDE BOND</scope>
    <scope>MUTAGENESIS OF GLN-153; GLN-177; ASP-178; VAL-198; ASP-199; ARG-267; TRP-269; THR-272 AND MET-306</scope>
    <source>
        <strain>3937</strain>
    </source>
</reference>
<evidence type="ECO:0000269" key="1">
    <source>
    </source>
</evidence>
<evidence type="ECO:0000269" key="2">
    <source>
    </source>
</evidence>
<evidence type="ECO:0000269" key="3">
    <source>
    </source>
</evidence>
<evidence type="ECO:0000303" key="4">
    <source>
    </source>
</evidence>
<evidence type="ECO:0000303" key="5">
    <source>
    </source>
</evidence>
<evidence type="ECO:0000305" key="6"/>
<evidence type="ECO:0000305" key="7">
    <source>
    </source>
</evidence>
<evidence type="ECO:0000305" key="8">
    <source>
    </source>
</evidence>
<evidence type="ECO:0007744" key="9">
    <source>
        <dbReference type="PDB" id="2NSP"/>
    </source>
</evidence>
<evidence type="ECO:0007744" key="10">
    <source>
        <dbReference type="PDB" id="2NST"/>
    </source>
</evidence>
<evidence type="ECO:0007744" key="11">
    <source>
        <dbReference type="PDB" id="2NT6"/>
    </source>
</evidence>
<evidence type="ECO:0007744" key="12">
    <source>
        <dbReference type="PDB" id="2NT9"/>
    </source>
</evidence>
<evidence type="ECO:0007744" key="13">
    <source>
        <dbReference type="PDB" id="2NTB"/>
    </source>
</evidence>
<evidence type="ECO:0007744" key="14">
    <source>
        <dbReference type="PDB" id="2NTP"/>
    </source>
</evidence>
<evidence type="ECO:0007744" key="15">
    <source>
        <dbReference type="PDB" id="2NTQ"/>
    </source>
</evidence>
<evidence type="ECO:0007829" key="16">
    <source>
        <dbReference type="PDB" id="2NSP"/>
    </source>
</evidence>
<accession>P0C1A9</accession>
<accession>E0SAZ5</accession>
<accession>P07863</accession>
<organism>
    <name type="scientific">Dickeya dadantii (strain 3937)</name>
    <name type="common">Erwinia chrysanthemi (strain 3937)</name>
    <dbReference type="NCBI Taxonomy" id="198628"/>
    <lineage>
        <taxon>Bacteria</taxon>
        <taxon>Pseudomonadati</taxon>
        <taxon>Pseudomonadota</taxon>
        <taxon>Gammaproteobacteria</taxon>
        <taxon>Enterobacterales</taxon>
        <taxon>Pectobacteriaceae</taxon>
        <taxon>Dickeya</taxon>
    </lineage>
</organism>
<protein>
    <recommendedName>
        <fullName>Pectinesterase A</fullName>
        <shortName>PE A</shortName>
        <ecNumber evidence="2">3.1.1.11</ecNumber>
    </recommendedName>
    <alternativeName>
        <fullName>Pectin methylesterase A</fullName>
        <shortName evidence="5">PME</shortName>
    </alternativeName>
</protein>
<feature type="signal peptide" evidence="2">
    <location>
        <begin position="1"/>
        <end position="24"/>
    </location>
</feature>
<feature type="chain" id="PRO_0000233033" description="Pectinesterase A">
    <location>
        <begin position="25"/>
        <end position="366"/>
    </location>
</feature>
<feature type="active site" description="Proton donor" evidence="1">
    <location>
        <position position="178"/>
    </location>
</feature>
<feature type="active site" description="Nucleophile" evidence="1">
    <location>
        <position position="199"/>
    </location>
</feature>
<feature type="binding site" evidence="1">
    <location>
        <position position="109"/>
    </location>
    <ligand>
        <name>substrate</name>
    </ligand>
</feature>
<feature type="binding site" evidence="1">
    <location>
        <position position="153"/>
    </location>
    <ligand>
        <name>substrate</name>
    </ligand>
</feature>
<feature type="binding site" evidence="1">
    <location>
        <position position="219"/>
    </location>
    <ligand>
        <name>substrate</name>
    </ligand>
</feature>
<feature type="binding site" evidence="1">
    <location>
        <position position="226"/>
    </location>
    <ligand>
        <name>substrate</name>
    </ligand>
</feature>
<feature type="binding site" evidence="1">
    <location>
        <position position="230"/>
    </location>
    <ligand>
        <name>substrate</name>
    </ligand>
</feature>
<feature type="binding site" evidence="1">
    <location>
        <position position="267"/>
    </location>
    <ligand>
        <name>substrate</name>
    </ligand>
</feature>
<feature type="binding site" evidence="1">
    <location>
        <position position="269"/>
    </location>
    <ligand>
        <name>substrate</name>
    </ligand>
</feature>
<feature type="binding site" evidence="1">
    <location>
        <position position="272"/>
    </location>
    <ligand>
        <name>substrate</name>
    </ligand>
</feature>
<feature type="site" description="Transition state stabilizer" evidence="1">
    <location>
        <position position="177"/>
    </location>
</feature>
<feature type="disulfide bond" evidence="1">
    <location>
        <begin position="192"/>
        <end position="212"/>
    </location>
</feature>
<feature type="mutagenesis site" description="Strong decrease in affinity for substrate." evidence="1">
    <original>Q</original>
    <variation>A</variation>
    <location>
        <position position="153"/>
    </location>
</feature>
<feature type="mutagenesis site" description="Strong decrease in catalytic activity." evidence="1">
    <original>Q</original>
    <variation>A</variation>
    <location>
        <position position="177"/>
    </location>
</feature>
<feature type="mutagenesis site" description="Loss of activity." evidence="1">
    <original>D</original>
    <variation>A</variation>
    <location>
        <position position="178"/>
    </location>
</feature>
<feature type="mutagenesis site" description="Strong decrease in catalytic activity." evidence="1">
    <original>V</original>
    <variation>A</variation>
    <location>
        <position position="198"/>
    </location>
</feature>
<feature type="mutagenesis site" description="Loss of activity." evidence="1">
    <original>D</original>
    <variation>A</variation>
    <location>
        <position position="199"/>
    </location>
</feature>
<feature type="mutagenesis site" description="Loss of activity." evidence="1">
    <original>R</original>
    <variation>A</variation>
    <location>
        <position position="267"/>
    </location>
</feature>
<feature type="mutagenesis site" description="Loss of activity." evidence="1">
    <original>W</original>
    <variation>A</variation>
    <location>
        <position position="269"/>
    </location>
</feature>
<feature type="mutagenesis site" description="Decreases affinity for substrate." evidence="1">
    <original>T</original>
    <variation>A</variation>
    <location>
        <position position="272"/>
    </location>
</feature>
<feature type="mutagenesis site" description="Strong decrease in catalytic activity. Decreases affinity for substrate." evidence="1">
    <original>M</original>
    <variation>A</variation>
    <location>
        <position position="306"/>
    </location>
</feature>
<feature type="strand" evidence="16">
    <location>
        <begin position="29"/>
        <end position="32"/>
    </location>
</feature>
<feature type="strand" evidence="16">
    <location>
        <begin position="36"/>
        <end position="38"/>
    </location>
</feature>
<feature type="strand" evidence="16">
    <location>
        <begin position="42"/>
        <end position="44"/>
    </location>
</feature>
<feature type="helix" evidence="16">
    <location>
        <begin position="45"/>
        <end position="50"/>
    </location>
</feature>
<feature type="strand" evidence="16">
    <location>
        <begin position="54"/>
        <end position="57"/>
    </location>
</feature>
<feature type="strand" evidence="16">
    <location>
        <begin position="59"/>
        <end position="63"/>
    </location>
</feature>
<feature type="strand" evidence="16">
    <location>
        <begin position="65"/>
        <end position="69"/>
    </location>
</feature>
<feature type="strand" evidence="16">
    <location>
        <begin position="72"/>
        <end position="74"/>
    </location>
</feature>
<feature type="strand" evidence="16">
    <location>
        <begin position="79"/>
        <end position="84"/>
    </location>
</feature>
<feature type="turn" evidence="16">
    <location>
        <begin position="86"/>
        <end position="88"/>
    </location>
</feature>
<feature type="strand" evidence="16">
    <location>
        <begin position="89"/>
        <end position="93"/>
    </location>
</feature>
<feature type="helix" evidence="16">
    <location>
        <begin position="108"/>
        <end position="111"/>
    </location>
</feature>
<feature type="strand" evidence="16">
    <location>
        <begin position="114"/>
        <end position="117"/>
    </location>
</feature>
<feature type="strand" evidence="16">
    <location>
        <begin position="119"/>
        <end position="121"/>
    </location>
</feature>
<feature type="strand" evidence="16">
    <location>
        <begin position="123"/>
        <end position="131"/>
    </location>
</feature>
<feature type="helix" evidence="16">
    <location>
        <begin position="135"/>
        <end position="140"/>
    </location>
</feature>
<feature type="strand" evidence="16">
    <location>
        <begin position="156"/>
        <end position="159"/>
    </location>
</feature>
<feature type="strand" evidence="16">
    <location>
        <begin position="164"/>
        <end position="174"/>
    </location>
</feature>
<feature type="strand" evidence="16">
    <location>
        <begin position="180"/>
        <end position="182"/>
    </location>
</feature>
<feature type="strand" evidence="16">
    <location>
        <begin position="184"/>
        <end position="191"/>
    </location>
</feature>
<feature type="strand" evidence="16">
    <location>
        <begin position="193"/>
        <end position="211"/>
    </location>
</feature>
<feature type="strand" evidence="16">
    <location>
        <begin position="213"/>
        <end position="216"/>
    </location>
</feature>
<feature type="strand" evidence="16">
    <location>
        <begin position="229"/>
        <end position="234"/>
    </location>
</feature>
<feature type="strand" evidence="16">
    <location>
        <begin position="244"/>
        <end position="248"/>
    </location>
</feature>
<feature type="strand" evidence="16">
    <location>
        <begin position="250"/>
        <end position="255"/>
    </location>
</feature>
<feature type="strand" evidence="16">
    <location>
        <begin position="263"/>
        <end position="266"/>
    </location>
</feature>
<feature type="strand" evidence="16">
    <location>
        <begin position="272"/>
        <end position="275"/>
    </location>
</feature>
<feature type="strand" evidence="16">
    <location>
        <begin position="278"/>
        <end position="281"/>
    </location>
</feature>
<feature type="strand" evidence="16">
    <location>
        <begin position="288"/>
        <end position="293"/>
    </location>
</feature>
<feature type="strand" evidence="16">
    <location>
        <begin position="300"/>
        <end position="302"/>
    </location>
</feature>
<feature type="strand" evidence="16">
    <location>
        <begin position="306"/>
        <end position="309"/>
    </location>
</feature>
<feature type="strand" evidence="16">
    <location>
        <begin position="315"/>
        <end position="318"/>
    </location>
</feature>
<feature type="helix" evidence="16">
    <location>
        <begin position="320"/>
        <end position="322"/>
    </location>
</feature>
<feature type="strand" evidence="16">
    <location>
        <begin position="323"/>
        <end position="329"/>
    </location>
</feature>
<feature type="helix" evidence="16">
    <location>
        <begin position="346"/>
        <end position="349"/>
    </location>
</feature>
<feature type="helix" evidence="16">
    <location>
        <begin position="350"/>
        <end position="352"/>
    </location>
</feature>
<feature type="helix" evidence="16">
    <location>
        <begin position="354"/>
        <end position="358"/>
    </location>
</feature>
<proteinExistence type="evidence at protein level"/>
<keyword id="KW-0002">3D-structure</keyword>
<keyword id="KW-0063">Aspartyl esterase</keyword>
<keyword id="KW-0961">Cell wall biogenesis/degradation</keyword>
<keyword id="KW-0903">Direct protein sequencing</keyword>
<keyword id="KW-1015">Disulfide bond</keyword>
<keyword id="KW-0378">Hydrolase</keyword>
<keyword id="KW-1185">Reference proteome</keyword>
<keyword id="KW-0964">Secreted</keyword>
<keyword id="KW-0732">Signal</keyword>
<dbReference type="EC" id="3.1.1.11" evidence="2"/>
<dbReference type="EMBL" id="L07644">
    <property type="protein sequence ID" value="AAA24852.1"/>
    <property type="molecule type" value="Genomic_DNA"/>
</dbReference>
<dbReference type="EMBL" id="CP002038">
    <property type="protein sequence ID" value="ADM99554.1"/>
    <property type="molecule type" value="Genomic_DNA"/>
</dbReference>
<dbReference type="PIR" id="JN0799">
    <property type="entry name" value="JN0799"/>
</dbReference>
<dbReference type="RefSeq" id="WP_013318985.1">
    <property type="nucleotide sequence ID" value="NC_014500.1"/>
</dbReference>
<dbReference type="PDB" id="2NSP">
    <property type="method" value="X-ray"/>
    <property type="resolution" value="1.70 A"/>
    <property type="chains" value="A/B=25-366"/>
</dbReference>
<dbReference type="PDB" id="2NST">
    <property type="method" value="X-ray"/>
    <property type="resolution" value="1.70 A"/>
    <property type="chains" value="A/B=25-366"/>
</dbReference>
<dbReference type="PDB" id="2NT6">
    <property type="method" value="X-ray"/>
    <property type="resolution" value="1.70 A"/>
    <property type="chains" value="A/B=25-366"/>
</dbReference>
<dbReference type="PDB" id="2NT9">
    <property type="method" value="X-ray"/>
    <property type="resolution" value="1.90 A"/>
    <property type="chains" value="A/B=25-366"/>
</dbReference>
<dbReference type="PDB" id="2NTB">
    <property type="method" value="X-ray"/>
    <property type="resolution" value="1.80 A"/>
    <property type="chains" value="A/B=25-366"/>
</dbReference>
<dbReference type="PDB" id="2NTP">
    <property type="method" value="X-ray"/>
    <property type="resolution" value="1.70 A"/>
    <property type="chains" value="A/B=25-366"/>
</dbReference>
<dbReference type="PDB" id="2NTQ">
    <property type="method" value="X-ray"/>
    <property type="resolution" value="1.80 A"/>
    <property type="chains" value="A/B=25-366"/>
</dbReference>
<dbReference type="PDBsum" id="2NSP"/>
<dbReference type="PDBsum" id="2NST"/>
<dbReference type="PDBsum" id="2NT6"/>
<dbReference type="PDBsum" id="2NT9"/>
<dbReference type="PDBsum" id="2NTB"/>
<dbReference type="PDBsum" id="2NTP"/>
<dbReference type="PDBsum" id="2NTQ"/>
<dbReference type="SMR" id="P0C1A9"/>
<dbReference type="STRING" id="198628.Dda3937_03374"/>
<dbReference type="KEGG" id="ddd:Dda3937_03374"/>
<dbReference type="PATRIC" id="fig|198628.6.peg.3312"/>
<dbReference type="eggNOG" id="COG4677">
    <property type="taxonomic scope" value="Bacteria"/>
</dbReference>
<dbReference type="HOGENOM" id="CLU_012243_3_1_6"/>
<dbReference type="OrthoDB" id="191551at2"/>
<dbReference type="BioCyc" id="MetaCyc:MONOMER-15656"/>
<dbReference type="UniPathway" id="UPA00545">
    <property type="reaction ID" value="UER00823"/>
</dbReference>
<dbReference type="EvolutionaryTrace" id="P0C1A9"/>
<dbReference type="Proteomes" id="UP000006859">
    <property type="component" value="Chromosome"/>
</dbReference>
<dbReference type="GO" id="GO:0009279">
    <property type="term" value="C:cell outer membrane"/>
    <property type="evidence" value="ECO:0007669"/>
    <property type="project" value="TreeGrafter"/>
</dbReference>
<dbReference type="GO" id="GO:0005615">
    <property type="term" value="C:extracellular space"/>
    <property type="evidence" value="ECO:0000314"/>
    <property type="project" value="ASAP"/>
</dbReference>
<dbReference type="GO" id="GO:0030599">
    <property type="term" value="F:pectinesterase activity"/>
    <property type="evidence" value="ECO:0000314"/>
    <property type="project" value="ASAP"/>
</dbReference>
<dbReference type="GO" id="GO:0042545">
    <property type="term" value="P:cell wall modification"/>
    <property type="evidence" value="ECO:0007669"/>
    <property type="project" value="InterPro"/>
</dbReference>
<dbReference type="GO" id="GO:0045490">
    <property type="term" value="P:pectin catabolic process"/>
    <property type="evidence" value="ECO:0007669"/>
    <property type="project" value="UniProtKB-UniPathway"/>
</dbReference>
<dbReference type="Gene3D" id="2.160.20.10">
    <property type="entry name" value="Single-stranded right-handed beta-helix, Pectin lyase-like"/>
    <property type="match status" value="1"/>
</dbReference>
<dbReference type="InterPro" id="IPR012334">
    <property type="entry name" value="Pectin_lyas_fold"/>
</dbReference>
<dbReference type="InterPro" id="IPR011050">
    <property type="entry name" value="Pectin_lyase_fold/virulence"/>
</dbReference>
<dbReference type="InterPro" id="IPR053505">
    <property type="entry name" value="Pectinesterase"/>
</dbReference>
<dbReference type="InterPro" id="IPR033131">
    <property type="entry name" value="Pectinesterase_Asp_AS"/>
</dbReference>
<dbReference type="InterPro" id="IPR000070">
    <property type="entry name" value="Pectinesterase_cat"/>
</dbReference>
<dbReference type="NCBIfam" id="NF041896">
    <property type="entry name" value="pecestase_PemA"/>
    <property type="match status" value="1"/>
</dbReference>
<dbReference type="PANTHER" id="PTHR31321">
    <property type="entry name" value="ACYL-COA THIOESTER HYDROLASE YBHC-RELATED"/>
    <property type="match status" value="1"/>
</dbReference>
<dbReference type="PANTHER" id="PTHR31321:SF57">
    <property type="entry name" value="PECTINESTERASE 53-RELATED"/>
    <property type="match status" value="1"/>
</dbReference>
<dbReference type="Pfam" id="PF01095">
    <property type="entry name" value="Pectinesterase"/>
    <property type="match status" value="1"/>
</dbReference>
<dbReference type="SUPFAM" id="SSF51126">
    <property type="entry name" value="Pectin lyase-like"/>
    <property type="match status" value="1"/>
</dbReference>
<dbReference type="PROSITE" id="PS00503">
    <property type="entry name" value="PECTINESTERASE_2"/>
    <property type="match status" value="1"/>
</dbReference>
<gene>
    <name evidence="4" type="primary">pemA</name>
    <name evidence="5" type="synonym">pem</name>
    <name type="ordered locus">Dda3937_03374</name>
</gene>
<sequence>MLKTISGTLALSLIIAASVHQAQAATTYNAVVSKSSSDGKTFKTIADAIASAPAGSTPFVILIKNGVYNERLTITRNNLHLKGESRNGAVIAAATAAGTLKSDGSKWGTAGSSTITISAKDFSAQSLTIRNDFDFPANQAKSDSDSSKIKDTQAVALYVTKSGDRAYFKDVSLVGYQDTLYVSGGRSFFSDCRISGTVDFIFGDGTALFNNCDLVSRYRADVKSGNVSGYLTAPSTNINQKYGLVITNSRVIRESDSVPAKSYGLGRPWHPTTTFSDGRYADPNAIGQTVFLNTSMDNHIYGWDKMSGKDKNGNTIWFNPEDSRFFEYKSYGAGATVSKDRRQLTDAQAAEYTQSKVLGDWTPTLP</sequence>
<comment type="function">
    <text evidence="7 8">Catalyzes the first step in maceration and soft-rotting of plant tissue.</text>
</comment>
<comment type="catalytic activity">
    <reaction evidence="1 2">
        <text>[(1-&gt;4)-alpha-D-galacturonosyl methyl ester](n) + n H2O = [(1-&gt;4)-alpha-D-galacturonosyl](n) + n methanol + n H(+)</text>
        <dbReference type="Rhea" id="RHEA:22380"/>
        <dbReference type="Rhea" id="RHEA-COMP:14570"/>
        <dbReference type="Rhea" id="RHEA-COMP:14573"/>
        <dbReference type="ChEBI" id="CHEBI:15377"/>
        <dbReference type="ChEBI" id="CHEBI:15378"/>
        <dbReference type="ChEBI" id="CHEBI:17790"/>
        <dbReference type="ChEBI" id="CHEBI:140522"/>
        <dbReference type="ChEBI" id="CHEBI:140523"/>
        <dbReference type="EC" id="3.1.1.11"/>
    </reaction>
</comment>
<comment type="pathway">
    <text evidence="7 8">Glycan metabolism; pectin degradation; 2-dehydro-3-deoxy-D-gluconate from pectin: step 1/5.</text>
</comment>
<comment type="subunit">
    <text evidence="1 2">Monomer.</text>
</comment>
<comment type="subcellular location">
    <subcellularLocation>
        <location evidence="2">Secreted</location>
    </subcellularLocation>
    <text evidence="2">Upon overexpression also accumulates in the periplasm.</text>
</comment>
<comment type="disruption phenotype">
    <text evidence="3">Decreased growth on methylated oligogalacturides; double pemA-pemB deletions grow very poorly on methylated oligogalacturides.</text>
</comment>
<comment type="similarity">
    <text evidence="6">Belongs to the pectinesterase family.</text>
</comment>
<name>PMEA_DICD3</name>